<reference key="1">
    <citation type="journal article" date="2007" name="PLoS ONE">
        <title>Molecular correlates of host specialization in Staphylococcus aureus.</title>
        <authorList>
            <person name="Herron-Olson L."/>
            <person name="Fitzgerald J.R."/>
            <person name="Musser J.M."/>
            <person name="Kapur V."/>
        </authorList>
    </citation>
    <scope>NUCLEOTIDE SEQUENCE [LARGE SCALE GENOMIC DNA]</scope>
    <source>
        <strain>bovine RF122 / ET3-1</strain>
    </source>
</reference>
<organism>
    <name type="scientific">Staphylococcus aureus (strain bovine RF122 / ET3-1)</name>
    <dbReference type="NCBI Taxonomy" id="273036"/>
    <lineage>
        <taxon>Bacteria</taxon>
        <taxon>Bacillati</taxon>
        <taxon>Bacillota</taxon>
        <taxon>Bacilli</taxon>
        <taxon>Bacillales</taxon>
        <taxon>Staphylococcaceae</taxon>
        <taxon>Staphylococcus</taxon>
    </lineage>
</organism>
<feature type="chain" id="PRO_0000230895" description="Transcriptional repressor NrdR">
    <location>
        <begin position="1"/>
        <end position="156"/>
    </location>
</feature>
<feature type="domain" description="ATP-cone" evidence="1">
    <location>
        <begin position="49"/>
        <end position="139"/>
    </location>
</feature>
<feature type="zinc finger region" evidence="1">
    <location>
        <begin position="3"/>
        <end position="34"/>
    </location>
</feature>
<name>NRDR_STAAB</name>
<evidence type="ECO:0000255" key="1">
    <source>
        <dbReference type="HAMAP-Rule" id="MF_00440"/>
    </source>
</evidence>
<sequence>MKCPKCNSTQSKVVDSRHADELNAIRRRRECENCGTRFTTFEHIEVSQLIVVKKDGTREQFSREKILNGLVRSCEKRPVRYQQLEDITNKVEWQLRDEGHTEVSSRDIGEHVMNLLMHVDQVSYVRFASVYKEFKDVDQLLASMQGILSENKRSDA</sequence>
<protein>
    <recommendedName>
        <fullName evidence="1">Transcriptional repressor NrdR</fullName>
    </recommendedName>
</protein>
<dbReference type="EMBL" id="AJ938182">
    <property type="protein sequence ID" value="CAI81234.1"/>
    <property type="molecule type" value="Genomic_DNA"/>
</dbReference>
<dbReference type="RefSeq" id="WP_000650082.1">
    <property type="nucleotide sequence ID" value="NC_007622.1"/>
</dbReference>
<dbReference type="SMR" id="Q2YTA4"/>
<dbReference type="GeneID" id="66839865"/>
<dbReference type="KEGG" id="sab:SAB1545c"/>
<dbReference type="HOGENOM" id="CLU_108412_0_0_9"/>
<dbReference type="GO" id="GO:0005524">
    <property type="term" value="F:ATP binding"/>
    <property type="evidence" value="ECO:0007669"/>
    <property type="project" value="UniProtKB-KW"/>
</dbReference>
<dbReference type="GO" id="GO:0003677">
    <property type="term" value="F:DNA binding"/>
    <property type="evidence" value="ECO:0007669"/>
    <property type="project" value="UniProtKB-KW"/>
</dbReference>
<dbReference type="GO" id="GO:0008270">
    <property type="term" value="F:zinc ion binding"/>
    <property type="evidence" value="ECO:0007669"/>
    <property type="project" value="UniProtKB-UniRule"/>
</dbReference>
<dbReference type="GO" id="GO:0045892">
    <property type="term" value="P:negative regulation of DNA-templated transcription"/>
    <property type="evidence" value="ECO:0007669"/>
    <property type="project" value="UniProtKB-UniRule"/>
</dbReference>
<dbReference type="HAMAP" id="MF_00440">
    <property type="entry name" value="NrdR"/>
    <property type="match status" value="1"/>
</dbReference>
<dbReference type="InterPro" id="IPR005144">
    <property type="entry name" value="ATP-cone_dom"/>
</dbReference>
<dbReference type="InterPro" id="IPR055173">
    <property type="entry name" value="NrdR-like_N"/>
</dbReference>
<dbReference type="InterPro" id="IPR003796">
    <property type="entry name" value="RNR_NrdR-like"/>
</dbReference>
<dbReference type="NCBIfam" id="TIGR00244">
    <property type="entry name" value="transcriptional regulator NrdR"/>
    <property type="match status" value="1"/>
</dbReference>
<dbReference type="PANTHER" id="PTHR30455">
    <property type="entry name" value="TRANSCRIPTIONAL REPRESSOR NRDR"/>
    <property type="match status" value="1"/>
</dbReference>
<dbReference type="PANTHER" id="PTHR30455:SF2">
    <property type="entry name" value="TRANSCRIPTIONAL REPRESSOR NRDR"/>
    <property type="match status" value="1"/>
</dbReference>
<dbReference type="Pfam" id="PF03477">
    <property type="entry name" value="ATP-cone"/>
    <property type="match status" value="1"/>
</dbReference>
<dbReference type="Pfam" id="PF22811">
    <property type="entry name" value="Zn_ribbon_NrdR"/>
    <property type="match status" value="1"/>
</dbReference>
<dbReference type="PROSITE" id="PS51161">
    <property type="entry name" value="ATP_CONE"/>
    <property type="match status" value="1"/>
</dbReference>
<comment type="function">
    <text evidence="1">Negatively regulates transcription of bacterial ribonucleotide reductase nrd genes and operons by binding to NrdR-boxes.</text>
</comment>
<comment type="cofactor">
    <cofactor evidence="1">
        <name>Zn(2+)</name>
        <dbReference type="ChEBI" id="CHEBI:29105"/>
    </cofactor>
    <text evidence="1">Binds 1 zinc ion.</text>
</comment>
<comment type="similarity">
    <text evidence="1">Belongs to the NrdR family.</text>
</comment>
<keyword id="KW-0067">ATP-binding</keyword>
<keyword id="KW-0238">DNA-binding</keyword>
<keyword id="KW-0479">Metal-binding</keyword>
<keyword id="KW-0547">Nucleotide-binding</keyword>
<keyword id="KW-0678">Repressor</keyword>
<keyword id="KW-0804">Transcription</keyword>
<keyword id="KW-0805">Transcription regulation</keyword>
<keyword id="KW-0862">Zinc</keyword>
<keyword id="KW-0863">Zinc-finger</keyword>
<proteinExistence type="inferred from homology"/>
<accession>Q2YTA4</accession>
<gene>
    <name evidence="1" type="primary">nrdR</name>
    <name type="ordered locus">SAB1545c</name>
</gene>